<protein>
    <recommendedName>
        <fullName evidence="1">Recombination protein RecR</fullName>
    </recommendedName>
</protein>
<reference key="1">
    <citation type="journal article" date="2006" name="J. Bacteriol.">
        <title>Pathogenomic sequence analysis of Bacillus cereus and Bacillus thuringiensis isolates closely related to Bacillus anthracis.</title>
        <authorList>
            <person name="Han C.S."/>
            <person name="Xie G."/>
            <person name="Challacombe J.F."/>
            <person name="Altherr M.R."/>
            <person name="Bhotika S.S."/>
            <person name="Bruce D."/>
            <person name="Campbell C.S."/>
            <person name="Campbell M.L."/>
            <person name="Chen J."/>
            <person name="Chertkov O."/>
            <person name="Cleland C."/>
            <person name="Dimitrijevic M."/>
            <person name="Doggett N.A."/>
            <person name="Fawcett J.J."/>
            <person name="Glavina T."/>
            <person name="Goodwin L.A."/>
            <person name="Hill K.K."/>
            <person name="Hitchcock P."/>
            <person name="Jackson P.J."/>
            <person name="Keim P."/>
            <person name="Kewalramani A.R."/>
            <person name="Longmire J."/>
            <person name="Lucas S."/>
            <person name="Malfatti S."/>
            <person name="McMurry K."/>
            <person name="Meincke L.J."/>
            <person name="Misra M."/>
            <person name="Moseman B.L."/>
            <person name="Mundt M."/>
            <person name="Munk A.C."/>
            <person name="Okinaka R.T."/>
            <person name="Parson-Quintana B."/>
            <person name="Reilly L.P."/>
            <person name="Richardson P."/>
            <person name="Robinson D.L."/>
            <person name="Rubin E."/>
            <person name="Saunders E."/>
            <person name="Tapia R."/>
            <person name="Tesmer J.G."/>
            <person name="Thayer N."/>
            <person name="Thompson L.S."/>
            <person name="Tice H."/>
            <person name="Ticknor L.O."/>
            <person name="Wills P.L."/>
            <person name="Brettin T.S."/>
            <person name="Gilna P."/>
        </authorList>
    </citation>
    <scope>NUCLEOTIDE SEQUENCE [LARGE SCALE GENOMIC DNA]</scope>
    <source>
        <strain>97-27</strain>
    </source>
</reference>
<name>RECR_BACHK</name>
<accession>Q6HPZ0</accession>
<sequence>MHYPEPISKLIDSFMKLPGIGPKTAVRLAFFVLDMKEDDVLGFAKALVNAKRDLAYCSVCGHITDRDPCYICNDSHRDQSVVCVVQEPKDVIAMEKMKEYQGVYHVLRGAISPMEGIGPEDINIPQLLKRLHDETVQEVILATNPNIEGEATAMYISRLLKPTGIKVTRIAHGLPVGGDLEYADEVTLSKALEGRREV</sequence>
<keyword id="KW-0227">DNA damage</keyword>
<keyword id="KW-0233">DNA recombination</keyword>
<keyword id="KW-0234">DNA repair</keyword>
<keyword id="KW-0479">Metal-binding</keyword>
<keyword id="KW-0862">Zinc</keyword>
<keyword id="KW-0863">Zinc-finger</keyword>
<proteinExistence type="inferred from homology"/>
<feature type="chain" id="PRO_0000190280" description="Recombination protein RecR">
    <location>
        <begin position="1"/>
        <end position="198"/>
    </location>
</feature>
<feature type="domain" description="Toprim" evidence="1">
    <location>
        <begin position="80"/>
        <end position="175"/>
    </location>
</feature>
<feature type="zinc finger region" description="C4-type" evidence="1">
    <location>
        <begin position="57"/>
        <end position="72"/>
    </location>
</feature>
<evidence type="ECO:0000255" key="1">
    <source>
        <dbReference type="HAMAP-Rule" id="MF_00017"/>
    </source>
</evidence>
<comment type="function">
    <text evidence="1">May play a role in DNA repair. It seems to be involved in an RecBC-independent recombinational process of DNA repair. It may act with RecF and RecO.</text>
</comment>
<comment type="similarity">
    <text evidence="1">Belongs to the RecR family.</text>
</comment>
<dbReference type="EMBL" id="AE017355">
    <property type="protein sequence ID" value="AAT60388.1"/>
    <property type="molecule type" value="Genomic_DNA"/>
</dbReference>
<dbReference type="RefSeq" id="WP_000559169.1">
    <property type="nucleotide sequence ID" value="NC_005957.1"/>
</dbReference>
<dbReference type="RefSeq" id="YP_034380.1">
    <property type="nucleotide sequence ID" value="NC_005957.1"/>
</dbReference>
<dbReference type="SMR" id="Q6HPZ0"/>
<dbReference type="GeneID" id="93011050"/>
<dbReference type="KEGG" id="btk:BT9727_0021"/>
<dbReference type="PATRIC" id="fig|281309.8.peg.22"/>
<dbReference type="HOGENOM" id="CLU_060739_1_0_9"/>
<dbReference type="Proteomes" id="UP000001301">
    <property type="component" value="Chromosome"/>
</dbReference>
<dbReference type="GO" id="GO:0003677">
    <property type="term" value="F:DNA binding"/>
    <property type="evidence" value="ECO:0007669"/>
    <property type="project" value="UniProtKB-UniRule"/>
</dbReference>
<dbReference type="GO" id="GO:0008270">
    <property type="term" value="F:zinc ion binding"/>
    <property type="evidence" value="ECO:0007669"/>
    <property type="project" value="UniProtKB-KW"/>
</dbReference>
<dbReference type="GO" id="GO:0006310">
    <property type="term" value="P:DNA recombination"/>
    <property type="evidence" value="ECO:0007669"/>
    <property type="project" value="UniProtKB-UniRule"/>
</dbReference>
<dbReference type="GO" id="GO:0006281">
    <property type="term" value="P:DNA repair"/>
    <property type="evidence" value="ECO:0007669"/>
    <property type="project" value="UniProtKB-UniRule"/>
</dbReference>
<dbReference type="CDD" id="cd01025">
    <property type="entry name" value="TOPRIM_recR"/>
    <property type="match status" value="1"/>
</dbReference>
<dbReference type="Gene3D" id="3.30.60.80">
    <property type="match status" value="1"/>
</dbReference>
<dbReference type="Gene3D" id="3.40.1360.10">
    <property type="match status" value="1"/>
</dbReference>
<dbReference type="Gene3D" id="6.10.250.240">
    <property type="match status" value="1"/>
</dbReference>
<dbReference type="Gene3D" id="1.10.8.420">
    <property type="entry name" value="RecR Domain 1"/>
    <property type="match status" value="1"/>
</dbReference>
<dbReference type="HAMAP" id="MF_00017">
    <property type="entry name" value="RecR"/>
    <property type="match status" value="1"/>
</dbReference>
<dbReference type="InterPro" id="IPR000093">
    <property type="entry name" value="DNA_Rcmb_RecR"/>
</dbReference>
<dbReference type="InterPro" id="IPR023627">
    <property type="entry name" value="Rcmb_RecR"/>
</dbReference>
<dbReference type="InterPro" id="IPR015967">
    <property type="entry name" value="Rcmb_RecR_Znf"/>
</dbReference>
<dbReference type="InterPro" id="IPR006171">
    <property type="entry name" value="TOPRIM_dom"/>
</dbReference>
<dbReference type="InterPro" id="IPR034137">
    <property type="entry name" value="TOPRIM_RecR"/>
</dbReference>
<dbReference type="NCBIfam" id="TIGR00615">
    <property type="entry name" value="recR"/>
    <property type="match status" value="1"/>
</dbReference>
<dbReference type="PANTHER" id="PTHR30446">
    <property type="entry name" value="RECOMBINATION PROTEIN RECR"/>
    <property type="match status" value="1"/>
</dbReference>
<dbReference type="PANTHER" id="PTHR30446:SF0">
    <property type="entry name" value="RECOMBINATION PROTEIN RECR"/>
    <property type="match status" value="1"/>
</dbReference>
<dbReference type="Pfam" id="PF21175">
    <property type="entry name" value="RecR_C"/>
    <property type="match status" value="1"/>
</dbReference>
<dbReference type="Pfam" id="PF21176">
    <property type="entry name" value="RecR_HhH"/>
    <property type="match status" value="1"/>
</dbReference>
<dbReference type="Pfam" id="PF02132">
    <property type="entry name" value="RecR_ZnF"/>
    <property type="match status" value="1"/>
</dbReference>
<dbReference type="Pfam" id="PF13662">
    <property type="entry name" value="Toprim_4"/>
    <property type="match status" value="1"/>
</dbReference>
<dbReference type="SMART" id="SM00493">
    <property type="entry name" value="TOPRIM"/>
    <property type="match status" value="1"/>
</dbReference>
<dbReference type="SUPFAM" id="SSF111304">
    <property type="entry name" value="Recombination protein RecR"/>
    <property type="match status" value="1"/>
</dbReference>
<dbReference type="PROSITE" id="PS01300">
    <property type="entry name" value="RECR"/>
    <property type="match status" value="1"/>
</dbReference>
<dbReference type="PROSITE" id="PS50880">
    <property type="entry name" value="TOPRIM"/>
    <property type="match status" value="1"/>
</dbReference>
<organism>
    <name type="scientific">Bacillus thuringiensis subsp. konkukian (strain 97-27)</name>
    <dbReference type="NCBI Taxonomy" id="281309"/>
    <lineage>
        <taxon>Bacteria</taxon>
        <taxon>Bacillati</taxon>
        <taxon>Bacillota</taxon>
        <taxon>Bacilli</taxon>
        <taxon>Bacillales</taxon>
        <taxon>Bacillaceae</taxon>
        <taxon>Bacillus</taxon>
        <taxon>Bacillus cereus group</taxon>
    </lineage>
</organism>
<gene>
    <name evidence="1" type="primary">recR</name>
    <name type="ordered locus">BT9727_0021</name>
</gene>